<feature type="chain" id="PRO_0000150208" description="Phosphoserine aminotransferase">
    <location>
        <begin position="1"/>
        <end position="365"/>
    </location>
</feature>
<feature type="binding site" evidence="1">
    <location>
        <position position="42"/>
    </location>
    <ligand>
        <name>L-glutamate</name>
        <dbReference type="ChEBI" id="CHEBI:29985"/>
    </ligand>
</feature>
<feature type="binding site" evidence="1">
    <location>
        <begin position="76"/>
        <end position="77"/>
    </location>
    <ligand>
        <name>pyridoxal 5'-phosphate</name>
        <dbReference type="ChEBI" id="CHEBI:597326"/>
    </ligand>
</feature>
<feature type="binding site" evidence="1">
    <location>
        <position position="102"/>
    </location>
    <ligand>
        <name>pyridoxal 5'-phosphate</name>
        <dbReference type="ChEBI" id="CHEBI:597326"/>
    </ligand>
</feature>
<feature type="binding site" evidence="1">
    <location>
        <position position="156"/>
    </location>
    <ligand>
        <name>pyridoxal 5'-phosphate</name>
        <dbReference type="ChEBI" id="CHEBI:597326"/>
    </ligand>
</feature>
<feature type="binding site" evidence="1">
    <location>
        <position position="175"/>
    </location>
    <ligand>
        <name>pyridoxal 5'-phosphate</name>
        <dbReference type="ChEBI" id="CHEBI:597326"/>
    </ligand>
</feature>
<feature type="binding site" evidence="1">
    <location>
        <position position="198"/>
    </location>
    <ligand>
        <name>pyridoxal 5'-phosphate</name>
        <dbReference type="ChEBI" id="CHEBI:597326"/>
    </ligand>
</feature>
<feature type="binding site" evidence="1">
    <location>
        <begin position="240"/>
        <end position="241"/>
    </location>
    <ligand>
        <name>pyridoxal 5'-phosphate</name>
        <dbReference type="ChEBI" id="CHEBI:597326"/>
    </ligand>
</feature>
<feature type="modified residue" description="N6-(pyridoxal phosphate)lysine" evidence="1">
    <location>
        <position position="199"/>
    </location>
</feature>
<evidence type="ECO:0000255" key="1">
    <source>
        <dbReference type="HAMAP-Rule" id="MF_00160"/>
    </source>
</evidence>
<protein>
    <recommendedName>
        <fullName evidence="1">Phosphoserine aminotransferase</fullName>
        <ecNumber evidence="1">2.6.1.52</ecNumber>
    </recommendedName>
    <alternativeName>
        <fullName evidence="1">Phosphohydroxythreonine aminotransferase</fullName>
        <shortName evidence="1">PSAT</shortName>
    </alternativeName>
</protein>
<name>SERC_SHEON</name>
<proteinExistence type="inferred from homology"/>
<organism>
    <name type="scientific">Shewanella oneidensis (strain ATCC 700550 / JCM 31522 / CIP 106686 / LMG 19005 / NCIMB 14063 / MR-1)</name>
    <dbReference type="NCBI Taxonomy" id="211586"/>
    <lineage>
        <taxon>Bacteria</taxon>
        <taxon>Pseudomonadati</taxon>
        <taxon>Pseudomonadota</taxon>
        <taxon>Gammaproteobacteria</taxon>
        <taxon>Alteromonadales</taxon>
        <taxon>Shewanellaceae</taxon>
        <taxon>Shewanella</taxon>
    </lineage>
</organism>
<comment type="function">
    <text evidence="1">Catalyzes the reversible conversion of 3-phosphohydroxypyruvate to phosphoserine and of 3-hydroxy-2-oxo-4-phosphonooxybutanoate to phosphohydroxythreonine.</text>
</comment>
<comment type="catalytic activity">
    <reaction evidence="1">
        <text>O-phospho-L-serine + 2-oxoglutarate = 3-phosphooxypyruvate + L-glutamate</text>
        <dbReference type="Rhea" id="RHEA:14329"/>
        <dbReference type="ChEBI" id="CHEBI:16810"/>
        <dbReference type="ChEBI" id="CHEBI:18110"/>
        <dbReference type="ChEBI" id="CHEBI:29985"/>
        <dbReference type="ChEBI" id="CHEBI:57524"/>
        <dbReference type="EC" id="2.6.1.52"/>
    </reaction>
</comment>
<comment type="catalytic activity">
    <reaction evidence="1">
        <text>4-(phosphooxy)-L-threonine + 2-oxoglutarate = (R)-3-hydroxy-2-oxo-4-phosphooxybutanoate + L-glutamate</text>
        <dbReference type="Rhea" id="RHEA:16573"/>
        <dbReference type="ChEBI" id="CHEBI:16810"/>
        <dbReference type="ChEBI" id="CHEBI:29985"/>
        <dbReference type="ChEBI" id="CHEBI:58452"/>
        <dbReference type="ChEBI" id="CHEBI:58538"/>
        <dbReference type="EC" id="2.6.1.52"/>
    </reaction>
</comment>
<comment type="cofactor">
    <cofactor evidence="1">
        <name>pyridoxal 5'-phosphate</name>
        <dbReference type="ChEBI" id="CHEBI:597326"/>
    </cofactor>
    <text evidence="1">Binds 1 pyridoxal phosphate per subunit.</text>
</comment>
<comment type="pathway">
    <text evidence="1">Amino-acid biosynthesis; L-serine biosynthesis; L-serine from 3-phospho-D-glycerate: step 2/3.</text>
</comment>
<comment type="pathway">
    <text evidence="1">Cofactor biosynthesis; pyridoxine 5'-phosphate biosynthesis; pyridoxine 5'-phosphate from D-erythrose 4-phosphate: step 3/5.</text>
</comment>
<comment type="subunit">
    <text evidence="1">Homodimer.</text>
</comment>
<comment type="subcellular location">
    <subcellularLocation>
        <location evidence="1">Cytoplasm</location>
    </subcellularLocation>
</comment>
<comment type="similarity">
    <text evidence="1">Belongs to the class-V pyridoxal-phosphate-dependent aminotransferase family. SerC subfamily.</text>
</comment>
<dbReference type="EC" id="2.6.1.52" evidence="1"/>
<dbReference type="EMBL" id="AE014299">
    <property type="protein sequence ID" value="AAN55444.2"/>
    <property type="molecule type" value="Genomic_DNA"/>
</dbReference>
<dbReference type="RefSeq" id="NP_718000.2">
    <property type="nucleotide sequence ID" value="NC_004347.2"/>
</dbReference>
<dbReference type="RefSeq" id="WP_011072388.1">
    <property type="nucleotide sequence ID" value="NC_004347.2"/>
</dbReference>
<dbReference type="SMR" id="Q8EEH2"/>
<dbReference type="STRING" id="211586.SO_2410"/>
<dbReference type="PaxDb" id="211586-SO_2410"/>
<dbReference type="KEGG" id="son:SO_2410"/>
<dbReference type="PATRIC" id="fig|211586.12.peg.2318"/>
<dbReference type="eggNOG" id="COG1932">
    <property type="taxonomic scope" value="Bacteria"/>
</dbReference>
<dbReference type="HOGENOM" id="CLU_034866_0_2_6"/>
<dbReference type="OrthoDB" id="9809412at2"/>
<dbReference type="PhylomeDB" id="Q8EEH2"/>
<dbReference type="BioCyc" id="SONE211586:G1GMP-2203-MONOMER"/>
<dbReference type="UniPathway" id="UPA00135">
    <property type="reaction ID" value="UER00197"/>
</dbReference>
<dbReference type="UniPathway" id="UPA00244">
    <property type="reaction ID" value="UER00311"/>
</dbReference>
<dbReference type="Proteomes" id="UP000008186">
    <property type="component" value="Chromosome"/>
</dbReference>
<dbReference type="GO" id="GO:0005737">
    <property type="term" value="C:cytoplasm"/>
    <property type="evidence" value="ECO:0000318"/>
    <property type="project" value="GO_Central"/>
</dbReference>
<dbReference type="GO" id="GO:0004648">
    <property type="term" value="F:O-phospho-L-serine:2-oxoglutarate aminotransferase activity"/>
    <property type="evidence" value="ECO:0000318"/>
    <property type="project" value="GO_Central"/>
</dbReference>
<dbReference type="GO" id="GO:0030170">
    <property type="term" value="F:pyridoxal phosphate binding"/>
    <property type="evidence" value="ECO:0000318"/>
    <property type="project" value="GO_Central"/>
</dbReference>
<dbReference type="GO" id="GO:0006564">
    <property type="term" value="P:L-serine biosynthetic process"/>
    <property type="evidence" value="ECO:0000318"/>
    <property type="project" value="GO_Central"/>
</dbReference>
<dbReference type="GO" id="GO:0008615">
    <property type="term" value="P:pyridoxine biosynthetic process"/>
    <property type="evidence" value="ECO:0007669"/>
    <property type="project" value="UniProtKB-UniRule"/>
</dbReference>
<dbReference type="FunFam" id="3.40.640.10:FF:000010">
    <property type="entry name" value="Phosphoserine aminotransferase"/>
    <property type="match status" value="1"/>
</dbReference>
<dbReference type="FunFam" id="3.90.1150.10:FF:000006">
    <property type="entry name" value="Phosphoserine aminotransferase"/>
    <property type="match status" value="1"/>
</dbReference>
<dbReference type="Gene3D" id="3.90.1150.10">
    <property type="entry name" value="Aspartate Aminotransferase, domain 1"/>
    <property type="match status" value="1"/>
</dbReference>
<dbReference type="Gene3D" id="3.40.640.10">
    <property type="entry name" value="Type I PLP-dependent aspartate aminotransferase-like (Major domain)"/>
    <property type="match status" value="1"/>
</dbReference>
<dbReference type="HAMAP" id="MF_00160">
    <property type="entry name" value="SerC_aminotrans_5"/>
    <property type="match status" value="1"/>
</dbReference>
<dbReference type="InterPro" id="IPR000192">
    <property type="entry name" value="Aminotrans_V_dom"/>
</dbReference>
<dbReference type="InterPro" id="IPR020578">
    <property type="entry name" value="Aminotrans_V_PyrdxlP_BS"/>
</dbReference>
<dbReference type="InterPro" id="IPR022278">
    <property type="entry name" value="Pser_aminoTfrase"/>
</dbReference>
<dbReference type="InterPro" id="IPR015424">
    <property type="entry name" value="PyrdxlP-dep_Trfase"/>
</dbReference>
<dbReference type="InterPro" id="IPR015421">
    <property type="entry name" value="PyrdxlP-dep_Trfase_major"/>
</dbReference>
<dbReference type="InterPro" id="IPR015422">
    <property type="entry name" value="PyrdxlP-dep_Trfase_small"/>
</dbReference>
<dbReference type="NCBIfam" id="NF003764">
    <property type="entry name" value="PRK05355.1"/>
    <property type="match status" value="1"/>
</dbReference>
<dbReference type="NCBIfam" id="TIGR01364">
    <property type="entry name" value="serC_1"/>
    <property type="match status" value="1"/>
</dbReference>
<dbReference type="PANTHER" id="PTHR43247">
    <property type="entry name" value="PHOSPHOSERINE AMINOTRANSFERASE"/>
    <property type="match status" value="1"/>
</dbReference>
<dbReference type="PANTHER" id="PTHR43247:SF1">
    <property type="entry name" value="PHOSPHOSERINE AMINOTRANSFERASE"/>
    <property type="match status" value="1"/>
</dbReference>
<dbReference type="Pfam" id="PF00266">
    <property type="entry name" value="Aminotran_5"/>
    <property type="match status" value="1"/>
</dbReference>
<dbReference type="PIRSF" id="PIRSF000525">
    <property type="entry name" value="SerC"/>
    <property type="match status" value="1"/>
</dbReference>
<dbReference type="SUPFAM" id="SSF53383">
    <property type="entry name" value="PLP-dependent transferases"/>
    <property type="match status" value="1"/>
</dbReference>
<dbReference type="PROSITE" id="PS00595">
    <property type="entry name" value="AA_TRANSFER_CLASS_5"/>
    <property type="match status" value="1"/>
</dbReference>
<sequence>MSAIYNFCAGPAMLPAAVMKKAQQELLDWNGLGVSVMEVSHRGKEFIALTKQAEADLRELMHIPQNYHVLFMHGGGRGQFSAVVNNFLGNQGRALYLVSGQWSSAALAEAQKLAGDAQIDSLNIVEKHNCLNAVVLPDLHKIDADYRYVHYCPNETVDGIEIFDELDSPWPIVADLSSTIMSREIDVSRYGLIYAGAQKNIGPSGLSIVIVRDDMLTLPSLPQSSIMDYRLAVEHDSMFNTPPTFAWYLAAEVFAWLKSIGGVASIAKINQQKAQMLYACIDANPFYKNGVVAANRSQMNVTFQLADESLDGAFLKEAEAVGLVALKGHRIVGGMRASLYNAMPLEGVAALVTFMNEFAAKHYNI</sequence>
<accession>Q8EEH2</accession>
<gene>
    <name evidence="1" type="primary">serC</name>
    <name type="ordered locus">SO_2410</name>
</gene>
<keyword id="KW-0028">Amino-acid biosynthesis</keyword>
<keyword id="KW-0032">Aminotransferase</keyword>
<keyword id="KW-0963">Cytoplasm</keyword>
<keyword id="KW-0663">Pyridoxal phosphate</keyword>
<keyword id="KW-0664">Pyridoxine biosynthesis</keyword>
<keyword id="KW-1185">Reference proteome</keyword>
<keyword id="KW-0718">Serine biosynthesis</keyword>
<keyword id="KW-0808">Transferase</keyword>
<reference key="1">
    <citation type="journal article" date="2002" name="Nat. Biotechnol.">
        <title>Genome sequence of the dissimilatory metal ion-reducing bacterium Shewanella oneidensis.</title>
        <authorList>
            <person name="Heidelberg J.F."/>
            <person name="Paulsen I.T."/>
            <person name="Nelson K.E."/>
            <person name="Gaidos E.J."/>
            <person name="Nelson W.C."/>
            <person name="Read T.D."/>
            <person name="Eisen J.A."/>
            <person name="Seshadri R."/>
            <person name="Ward N.L."/>
            <person name="Methe B.A."/>
            <person name="Clayton R.A."/>
            <person name="Meyer T."/>
            <person name="Tsapin A."/>
            <person name="Scott J."/>
            <person name="Beanan M.J."/>
            <person name="Brinkac L.M."/>
            <person name="Daugherty S.C."/>
            <person name="DeBoy R.T."/>
            <person name="Dodson R.J."/>
            <person name="Durkin A.S."/>
            <person name="Haft D.H."/>
            <person name="Kolonay J.F."/>
            <person name="Madupu R."/>
            <person name="Peterson J.D."/>
            <person name="Umayam L.A."/>
            <person name="White O."/>
            <person name="Wolf A.M."/>
            <person name="Vamathevan J.J."/>
            <person name="Weidman J.F."/>
            <person name="Impraim M."/>
            <person name="Lee K."/>
            <person name="Berry K.J."/>
            <person name="Lee C."/>
            <person name="Mueller J."/>
            <person name="Khouri H.M."/>
            <person name="Gill J."/>
            <person name="Utterback T.R."/>
            <person name="McDonald L.A."/>
            <person name="Feldblyum T.V."/>
            <person name="Smith H.O."/>
            <person name="Venter J.C."/>
            <person name="Nealson K.H."/>
            <person name="Fraser C.M."/>
        </authorList>
    </citation>
    <scope>NUCLEOTIDE SEQUENCE [LARGE SCALE GENOMIC DNA]</scope>
    <source>
        <strain>ATCC 700550 / JCM 31522 / CIP 106686 / LMG 19005 / NCIMB 14063 / MR-1</strain>
    </source>
</reference>